<dbReference type="EC" id="3.6.1.15"/>
<dbReference type="EMBL" id="U94848">
    <property type="protein sequence ID" value="AAB96451.1"/>
    <property type="molecule type" value="Genomic_DNA"/>
</dbReference>
<dbReference type="EMBL" id="AY603355">
    <property type="protein sequence ID" value="AAT10506.1"/>
    <property type="molecule type" value="Genomic_DNA"/>
</dbReference>
<dbReference type="PIR" id="T37384">
    <property type="entry name" value="T37384"/>
</dbReference>
<dbReference type="SMR" id="O57214"/>
<dbReference type="Proteomes" id="UP000159908">
    <property type="component" value="Segment"/>
</dbReference>
<dbReference type="Proteomes" id="UP000172909">
    <property type="component" value="Segment"/>
</dbReference>
<dbReference type="GO" id="GO:0005524">
    <property type="term" value="F:ATP binding"/>
    <property type="evidence" value="ECO:0007669"/>
    <property type="project" value="UniProtKB-KW"/>
</dbReference>
<dbReference type="GO" id="GO:0017111">
    <property type="term" value="F:ribonucleoside triphosphate phosphatase activity"/>
    <property type="evidence" value="ECO:0007669"/>
    <property type="project" value="UniProtKB-EC"/>
</dbReference>
<dbReference type="GO" id="GO:0006351">
    <property type="term" value="P:DNA-templated transcription"/>
    <property type="evidence" value="ECO:0007669"/>
    <property type="project" value="InterPro"/>
</dbReference>
<dbReference type="CDD" id="cd18785">
    <property type="entry name" value="SF2_C"/>
    <property type="match status" value="1"/>
</dbReference>
<dbReference type="Gene3D" id="3.40.50.300">
    <property type="entry name" value="P-loop containing nucleotide triphosphate hydrolases"/>
    <property type="match status" value="2"/>
</dbReference>
<dbReference type="InterPro" id="IPR014001">
    <property type="entry name" value="Helicase_ATP-bd"/>
</dbReference>
<dbReference type="InterPro" id="IPR001650">
    <property type="entry name" value="Helicase_C-like"/>
</dbReference>
<dbReference type="InterPro" id="IPR013676">
    <property type="entry name" value="NPHI_C"/>
</dbReference>
<dbReference type="InterPro" id="IPR027417">
    <property type="entry name" value="P-loop_NTPase"/>
</dbReference>
<dbReference type="InterPro" id="IPR000330">
    <property type="entry name" value="SNF2_N"/>
</dbReference>
<dbReference type="PANTHER" id="PTHR10799">
    <property type="entry name" value="SNF2/RAD54 HELICASE FAMILY"/>
    <property type="match status" value="1"/>
</dbReference>
<dbReference type="Pfam" id="PF00271">
    <property type="entry name" value="Helicase_C"/>
    <property type="match status" value="1"/>
</dbReference>
<dbReference type="Pfam" id="PF08469">
    <property type="entry name" value="NPHI_C"/>
    <property type="match status" value="1"/>
</dbReference>
<dbReference type="Pfam" id="PF00176">
    <property type="entry name" value="SNF2-rel_dom"/>
    <property type="match status" value="1"/>
</dbReference>
<dbReference type="SMART" id="SM00487">
    <property type="entry name" value="DEXDc"/>
    <property type="match status" value="1"/>
</dbReference>
<dbReference type="SMART" id="SM00490">
    <property type="entry name" value="HELICc"/>
    <property type="match status" value="1"/>
</dbReference>
<dbReference type="SUPFAM" id="SSF52540">
    <property type="entry name" value="P-loop containing nucleoside triphosphate hydrolases"/>
    <property type="match status" value="2"/>
</dbReference>
<dbReference type="PROSITE" id="PS51192">
    <property type="entry name" value="HELICASE_ATP_BIND_1"/>
    <property type="match status" value="1"/>
</dbReference>
<dbReference type="PROSITE" id="PS51194">
    <property type="entry name" value="HELICASE_CTER"/>
    <property type="match status" value="1"/>
</dbReference>
<sequence length="631" mass="72381">MSKSHAAYIDYALRRTTNMPVEMMGTDVVRLKDYQHFVARVFLGLDSMHSLLLFHETGVGKTMTTVYILKHLKDIYTNWAIILLVKKALIEDPWMNTILRYAPEITKDCIFINYDDQNFRNKFFTNIKTINSKSRICVIIDECHNFISKSLIKEDGKIRPTRSVYNFLSKTIALKNHKMICLSATPIVNSVQEFTMLVNLLRPGSLQHQSLFENKRLVDEKELVSKLGGLCSYIVNNEFSIFDDVEGSASFAKKTVLMRYVNMSKKQEEIYQKAKLAEIKTGISSFRILRRMATTFTFDSFPERQNRDPGEYAQEIATLYNDFKNSLRDREFSKSALDTFKKGELLKGDASAADISLFTELKEKSVKFIDVCLGILASHGKCLVFEPFVNQSGIEILLLYFKVFGISNIEFSSRTKDTRIKAVAEFNQESNTNGECIKTCVFSSSGGEGISFFSINDIFILDMTWNEASLRQIVGRAIRLNSHVLTPPERRYVNVHFIMARLSNGMPTVDEDLFEIIQSKSKEFVQLFRVFKHTSLEWIHANEKDFSPIDNESGWKTLVSRAIDLSSKKNITNKLIEGTNIWYSNSNRLMSINRGFKGVDGRVYDVDGNYLHDMPDNPVIKIHDGKLIYIF</sequence>
<proteinExistence type="inferred from homology"/>
<feature type="chain" id="PRO_0000099090" description="Nucleoside triphosphatase I">
    <location>
        <begin position="1"/>
        <end position="631"/>
    </location>
</feature>
<feature type="domain" description="Helicase ATP-binding" evidence="1">
    <location>
        <begin position="42"/>
        <end position="204"/>
    </location>
</feature>
<feature type="domain" description="Helicase C-terminal" evidence="2">
    <location>
        <begin position="367"/>
        <end position="532"/>
    </location>
</feature>
<feature type="short sequence motif" description="DEXH box">
    <location>
        <begin position="141"/>
        <end position="144"/>
    </location>
</feature>
<feature type="binding site" evidence="1">
    <location>
        <begin position="55"/>
        <end position="62"/>
    </location>
    <ligand>
        <name>ATP</name>
        <dbReference type="ChEBI" id="CHEBI:30616"/>
    </ligand>
</feature>
<name>NTP1_VACCA</name>
<protein>
    <recommendedName>
        <fullName>Nucleoside triphosphatase I</fullName>
        <ecNumber>3.6.1.15</ecNumber>
    </recommendedName>
    <alternativeName>
        <fullName>Factor X</fullName>
    </alternativeName>
    <alternativeName>
        <fullName>Nucleoside triphosphate phosphohydrolase I</fullName>
        <shortName>NPH I</shortName>
    </alternativeName>
</protein>
<gene>
    <name type="primary">NPH1</name>
    <name type="ordered locus">MVA108L</name>
    <name type="ordered locus">ACAM3000_MVA_108</name>
</gene>
<organismHost>
    <name type="scientific">Homo sapiens</name>
    <name type="common">Human</name>
    <dbReference type="NCBI Taxonomy" id="9606"/>
</organismHost>
<organism>
    <name type="scientific">Vaccinia virus (strain Ankara)</name>
    <name type="common">VACV</name>
    <dbReference type="NCBI Taxonomy" id="126794"/>
    <lineage>
        <taxon>Viruses</taxon>
        <taxon>Varidnaviria</taxon>
        <taxon>Bamfordvirae</taxon>
        <taxon>Nucleocytoviricota</taxon>
        <taxon>Pokkesviricetes</taxon>
        <taxon>Chitovirales</taxon>
        <taxon>Poxviridae</taxon>
        <taxon>Chordopoxvirinae</taxon>
        <taxon>Orthopoxvirus</taxon>
        <taxon>Vaccinia virus</taxon>
    </lineage>
</organism>
<evidence type="ECO:0000255" key="1">
    <source>
        <dbReference type="PROSITE-ProRule" id="PRU00541"/>
    </source>
</evidence>
<evidence type="ECO:0000255" key="2">
    <source>
        <dbReference type="PROSITE-ProRule" id="PRU00542"/>
    </source>
</evidence>
<evidence type="ECO:0000305" key="3"/>
<accession>O57214</accession>
<accession>Q6J3C2</accession>
<reference key="1">
    <citation type="journal article" date="1998" name="Virology">
        <title>The complete genomic sequence of the modified vaccinia Ankara strain: comparison with other orthopoxviruses.</title>
        <authorList>
            <person name="Antoine G."/>
            <person name="Scheiflinger F."/>
            <person name="Dorner F."/>
            <person name="Falkner F.G."/>
        </authorList>
    </citation>
    <scope>NUCLEOTIDE SEQUENCE [LARGE SCALE GENOMIC DNA]</scope>
</reference>
<reference key="2">
    <citation type="submission" date="2004-04" db="EMBL/GenBank/DDBJ databases">
        <authorList>
            <person name="Esposito J.J."/>
            <person name="Frace M."/>
            <person name="Sammons S.A."/>
            <person name="Olsen-Rasmussen M.S."/>
            <person name="Osborne J."/>
            <person name="Khristova M."/>
            <person name="Wohlhueter R.M."/>
        </authorList>
    </citation>
    <scope>NUCLEOTIDE SEQUENCE [LARGE SCALE GENOMIC DNA]</scope>
    <source>
        <strain>Isolate Acambis 3000</strain>
    </source>
</reference>
<keyword id="KW-0067">ATP-binding</keyword>
<keyword id="KW-0378">Hydrolase</keyword>
<keyword id="KW-0426">Late protein</keyword>
<keyword id="KW-0547">Nucleotide-binding</keyword>
<keyword id="KW-0804">Transcription</keyword>
<comment type="function">
    <text>Serves two roles in transcription; it acts in concert with viral termination factor/capping enzyme to catalyze release of UUUUUNU-containing nascent RNA from the elongation complex, and it acts by itself as a polymerase elongation factor to facilitate readthrough of intrinsic pause sites.</text>
</comment>
<comment type="catalytic activity">
    <reaction>
        <text>a ribonucleoside 5'-triphosphate + H2O = a ribonucleoside 5'-diphosphate + phosphate + H(+)</text>
        <dbReference type="Rhea" id="RHEA:23680"/>
        <dbReference type="ChEBI" id="CHEBI:15377"/>
        <dbReference type="ChEBI" id="CHEBI:15378"/>
        <dbReference type="ChEBI" id="CHEBI:43474"/>
        <dbReference type="ChEBI" id="CHEBI:57930"/>
        <dbReference type="ChEBI" id="CHEBI:61557"/>
        <dbReference type="EC" id="3.6.1.15"/>
    </reaction>
</comment>
<comment type="subunit">
    <text>Monomer.</text>
</comment>
<comment type="similarity">
    <text evidence="3">Belongs to the helicase family. NPH I subfamily.</text>
</comment>